<comment type="function">
    <text evidence="1">K(+)/H(+) antiporter that extrudes potassium in exchange for external protons and maintains the internal concentration of potassium under toxic levels.</text>
</comment>
<comment type="catalytic activity">
    <reaction evidence="1">
        <text>K(+)(in) + H(+)(out) = K(+)(out) + H(+)(in)</text>
        <dbReference type="Rhea" id="RHEA:29467"/>
        <dbReference type="ChEBI" id="CHEBI:15378"/>
        <dbReference type="ChEBI" id="CHEBI:29103"/>
    </reaction>
    <physiologicalReaction direction="left-to-right" evidence="1">
        <dbReference type="Rhea" id="RHEA:29468"/>
    </physiologicalReaction>
</comment>
<comment type="subcellular location">
    <subcellularLocation>
        <location evidence="1">Cell inner membrane</location>
        <topology evidence="1">Multi-pass membrane protein</topology>
    </subcellularLocation>
</comment>
<comment type="similarity">
    <text evidence="1">Belongs to the monovalent cation:proton antiporter 1 (CPA1) transporter (TC 2.A.36) family. NhaP2 subfamily.</text>
</comment>
<evidence type="ECO:0000255" key="1">
    <source>
        <dbReference type="HAMAP-Rule" id="MF_01075"/>
    </source>
</evidence>
<organism>
    <name type="scientific">Pseudomonas paraeruginosa (strain DSM 24068 / PA7)</name>
    <name type="common">Pseudomonas aeruginosa (strain PA7)</name>
    <dbReference type="NCBI Taxonomy" id="381754"/>
    <lineage>
        <taxon>Bacteria</taxon>
        <taxon>Pseudomonadati</taxon>
        <taxon>Pseudomonadota</taxon>
        <taxon>Gammaproteobacteria</taxon>
        <taxon>Pseudomonadales</taxon>
        <taxon>Pseudomonadaceae</taxon>
        <taxon>Pseudomonas</taxon>
        <taxon>Pseudomonas paraeruginosa</taxon>
    </lineage>
</organism>
<reference key="1">
    <citation type="submission" date="2007-06" db="EMBL/GenBank/DDBJ databases">
        <authorList>
            <person name="Dodson R.J."/>
            <person name="Harkins D."/>
            <person name="Paulsen I.T."/>
        </authorList>
    </citation>
    <scope>NUCLEOTIDE SEQUENCE [LARGE SCALE GENOMIC DNA]</scope>
    <source>
        <strain>DSM 24068 / PA7</strain>
    </source>
</reference>
<proteinExistence type="inferred from homology"/>
<name>NHAP2_PSEP7</name>
<gene>
    <name evidence="1" type="primary">nhaP2</name>
    <name type="synonym">cvrA</name>
    <name type="ordered locus">PSPA7_5758</name>
</gene>
<protein>
    <recommendedName>
        <fullName evidence="1">K(+)/H(+) antiporter NhaP2</fullName>
    </recommendedName>
    <alternativeName>
        <fullName evidence="1">Potassium/proton antiporter NhaP2</fullName>
    </alternativeName>
</protein>
<feature type="chain" id="PRO_1000064668" description="K(+)/H(+) antiporter NhaP2">
    <location>
        <begin position="1"/>
        <end position="580"/>
    </location>
</feature>
<feature type="transmembrane region" description="Helical" evidence="1">
    <location>
        <begin position="3"/>
        <end position="23"/>
    </location>
</feature>
<feature type="transmembrane region" description="Helical" evidence="1">
    <location>
        <begin position="34"/>
        <end position="54"/>
    </location>
</feature>
<feature type="transmembrane region" description="Helical" evidence="1">
    <location>
        <begin position="58"/>
        <end position="78"/>
    </location>
</feature>
<feature type="transmembrane region" description="Helical" evidence="1">
    <location>
        <begin position="95"/>
        <end position="115"/>
    </location>
</feature>
<feature type="transmembrane region" description="Helical" evidence="1">
    <location>
        <begin position="122"/>
        <end position="142"/>
    </location>
</feature>
<feature type="transmembrane region" description="Helical" evidence="1">
    <location>
        <begin position="163"/>
        <end position="183"/>
    </location>
</feature>
<feature type="transmembrane region" description="Helical" evidence="1">
    <location>
        <begin position="185"/>
        <end position="205"/>
    </location>
</feature>
<feature type="transmembrane region" description="Helical" evidence="1">
    <location>
        <begin position="218"/>
        <end position="238"/>
    </location>
</feature>
<feature type="transmembrane region" description="Helical" evidence="1">
    <location>
        <begin position="241"/>
        <end position="261"/>
    </location>
</feature>
<feature type="transmembrane region" description="Helical" evidence="1">
    <location>
        <begin position="270"/>
        <end position="290"/>
    </location>
</feature>
<feature type="transmembrane region" description="Helical" evidence="1">
    <location>
        <begin position="303"/>
        <end position="323"/>
    </location>
</feature>
<feature type="transmembrane region" description="Helical" evidence="1">
    <location>
        <begin position="335"/>
        <end position="355"/>
    </location>
</feature>
<feature type="transmembrane region" description="Helical" evidence="1">
    <location>
        <begin position="363"/>
        <end position="383"/>
    </location>
</feature>
<feature type="domain" description="RCK C-terminal" evidence="1">
    <location>
        <begin position="403"/>
        <end position="485"/>
    </location>
</feature>
<accession>A6VDE2</accession>
<sequence>MDAVTVNNFFLIGAVLVGMSILVSSLSSRLGIPILVIFLAVGMIAGNDGVGGIVFDNYPMAYLVGNLALAVILLDGGLRTRVSSFRVALWPALSLATLGVLVTTGLTGIAAAWLFDLHWMEGLLIGAIVGSTDAAAVFSLLGGKGLNERVTATLEIESGSNDPMAVFLTVTLIEMLASGQTGLSWGFVLHLLQQFGLGALLGLGGGWLLLQLINRMHLAGGLYPLLVISGGLLVFALANAVGGSGILAIYLCGLLLGNRPIRSRHGILHMLDGMAWLAQIGMFLVLGLLVTPHDLWPIALPALALALWMILVARPLSVLIGLIPFRAFHDREKAFIAWVGLRGAVPIILAVFPLMAGLPNAQLFFNVAFFIVLVSLLVQGTSLPWAAKLLRVVVPPDPAPISRAGLEIHPTSEWELFVYHLNKEKWCIGAALRELKMPEGTRIAALFRGTQLLHPSGSTILEADDILCVIGHEHDLPALGKLFSQAPDRGLGARFFGDFVLEGDAQLSAVASLYGLKLDGVDGEQPLGRFIAHEIGGEAVIGDQVEWNGLTWTVAALEGNRIRKVGVKFPEGRAGPGLFL</sequence>
<dbReference type="EMBL" id="CP000744">
    <property type="protein sequence ID" value="ABR81781.1"/>
    <property type="molecule type" value="Genomic_DNA"/>
</dbReference>
<dbReference type="RefSeq" id="WP_012077703.1">
    <property type="nucleotide sequence ID" value="NC_009656.1"/>
</dbReference>
<dbReference type="SMR" id="A6VDE2"/>
<dbReference type="GeneID" id="77223561"/>
<dbReference type="KEGG" id="pap:PSPA7_5758"/>
<dbReference type="HOGENOM" id="CLU_005912_9_2_6"/>
<dbReference type="Proteomes" id="UP000001582">
    <property type="component" value="Chromosome"/>
</dbReference>
<dbReference type="GO" id="GO:0005886">
    <property type="term" value="C:plasma membrane"/>
    <property type="evidence" value="ECO:0007669"/>
    <property type="project" value="UniProtKB-SubCell"/>
</dbReference>
<dbReference type="GO" id="GO:0050660">
    <property type="term" value="F:flavin adenine dinucleotide binding"/>
    <property type="evidence" value="ECO:0007669"/>
    <property type="project" value="InterPro"/>
</dbReference>
<dbReference type="GO" id="GO:0015386">
    <property type="term" value="F:potassium:proton antiporter activity"/>
    <property type="evidence" value="ECO:0007669"/>
    <property type="project" value="UniProtKB-UniRule"/>
</dbReference>
<dbReference type="GO" id="GO:0006884">
    <property type="term" value="P:cell volume homeostasis"/>
    <property type="evidence" value="ECO:0007669"/>
    <property type="project" value="InterPro"/>
</dbReference>
<dbReference type="Gene3D" id="1.20.1530.20">
    <property type="match status" value="1"/>
</dbReference>
<dbReference type="Gene3D" id="3.30.465.10">
    <property type="match status" value="1"/>
</dbReference>
<dbReference type="Gene3D" id="3.30.70.1450">
    <property type="entry name" value="Regulator of K+ conductance, C-terminal domain"/>
    <property type="match status" value="1"/>
</dbReference>
<dbReference type="HAMAP" id="MF_01075">
    <property type="entry name" value="NhaP2"/>
    <property type="match status" value="1"/>
</dbReference>
<dbReference type="InterPro" id="IPR006153">
    <property type="entry name" value="Cation/H_exchanger_TM"/>
</dbReference>
<dbReference type="InterPro" id="IPR036318">
    <property type="entry name" value="FAD-bd_PCMH-like_sf"/>
</dbReference>
<dbReference type="InterPro" id="IPR016169">
    <property type="entry name" value="FAD-bd_PCMH_sub2"/>
</dbReference>
<dbReference type="InterPro" id="IPR038770">
    <property type="entry name" value="Na+/solute_symporter_sf"/>
</dbReference>
<dbReference type="InterPro" id="IPR023729">
    <property type="entry name" value="NhaP2"/>
</dbReference>
<dbReference type="InterPro" id="IPR006037">
    <property type="entry name" value="RCK_C"/>
</dbReference>
<dbReference type="InterPro" id="IPR036721">
    <property type="entry name" value="RCK_C_sf"/>
</dbReference>
<dbReference type="InterPro" id="IPR005170">
    <property type="entry name" value="Transptr-assoc_dom"/>
</dbReference>
<dbReference type="NCBIfam" id="NF003714">
    <property type="entry name" value="PRK05326.1-1"/>
    <property type="match status" value="1"/>
</dbReference>
<dbReference type="NCBIfam" id="NF003715">
    <property type="entry name" value="PRK05326.1-2"/>
    <property type="match status" value="1"/>
</dbReference>
<dbReference type="NCBIfam" id="NF003716">
    <property type="entry name" value="PRK05326.1-3"/>
    <property type="match status" value="1"/>
</dbReference>
<dbReference type="PANTHER" id="PTHR32507:SF7">
    <property type="entry name" value="K(+)_H(+) ANTIPORTER NHAP2"/>
    <property type="match status" value="1"/>
</dbReference>
<dbReference type="PANTHER" id="PTHR32507">
    <property type="entry name" value="NA(+)/H(+) ANTIPORTER 1"/>
    <property type="match status" value="1"/>
</dbReference>
<dbReference type="Pfam" id="PF03471">
    <property type="entry name" value="CorC_HlyC"/>
    <property type="match status" value="1"/>
</dbReference>
<dbReference type="Pfam" id="PF00999">
    <property type="entry name" value="Na_H_Exchanger"/>
    <property type="match status" value="1"/>
</dbReference>
<dbReference type="Pfam" id="PF02080">
    <property type="entry name" value="TrkA_C"/>
    <property type="match status" value="1"/>
</dbReference>
<dbReference type="SMART" id="SM01091">
    <property type="entry name" value="CorC_HlyC"/>
    <property type="match status" value="1"/>
</dbReference>
<dbReference type="SUPFAM" id="SSF56176">
    <property type="entry name" value="FAD-binding/transporter-associated domain-like"/>
    <property type="match status" value="1"/>
</dbReference>
<dbReference type="SUPFAM" id="SSF116726">
    <property type="entry name" value="TrkA C-terminal domain-like"/>
    <property type="match status" value="1"/>
</dbReference>
<dbReference type="PROSITE" id="PS51202">
    <property type="entry name" value="RCK_C"/>
    <property type="match status" value="1"/>
</dbReference>
<keyword id="KW-0050">Antiport</keyword>
<keyword id="KW-0997">Cell inner membrane</keyword>
<keyword id="KW-1003">Cell membrane</keyword>
<keyword id="KW-0406">Ion transport</keyword>
<keyword id="KW-0472">Membrane</keyword>
<keyword id="KW-0630">Potassium</keyword>
<keyword id="KW-0633">Potassium transport</keyword>
<keyword id="KW-0812">Transmembrane</keyword>
<keyword id="KW-1133">Transmembrane helix</keyword>
<keyword id="KW-0813">Transport</keyword>